<sequence length="105" mass="11629">MSPRRTSGGVVPVDRYRIDEGLIVVLVFAGRDERRRTVCFADKFGCVHIGNPDLYRPQTSLPQPLPISSHAISGSRFVETTNRADQQEPIGPNRAELFDQALHAG</sequence>
<protein>
    <recommendedName>
        <fullName>Uncharacterized protein Rv2644c</fullName>
    </recommendedName>
</protein>
<keyword id="KW-1185">Reference proteome</keyword>
<feature type="chain" id="PRO_0000104078" description="Uncharacterized protein Rv2644c">
    <location>
        <begin position="1"/>
        <end position="105"/>
    </location>
</feature>
<gene>
    <name type="ordered locus">Rv2644c</name>
    <name type="ORF">MTCY441.14c</name>
</gene>
<dbReference type="EMBL" id="AL123456">
    <property type="protein sequence ID" value="CCP45442.1"/>
    <property type="molecule type" value="Genomic_DNA"/>
</dbReference>
<dbReference type="PIR" id="H70964">
    <property type="entry name" value="H70964"/>
</dbReference>
<dbReference type="RefSeq" id="NP_217160.1">
    <property type="nucleotide sequence ID" value="NC_000962.3"/>
</dbReference>
<dbReference type="RefSeq" id="WP_003900537.1">
    <property type="nucleotide sequence ID" value="NC_000962.3"/>
</dbReference>
<dbReference type="PaxDb" id="83332-Rv2644c"/>
<dbReference type="DNASU" id="887366"/>
<dbReference type="GeneID" id="887366"/>
<dbReference type="KEGG" id="mtu:Rv2644c"/>
<dbReference type="KEGG" id="mtv:RVBD_2644c"/>
<dbReference type="TubercuList" id="Rv2644c"/>
<dbReference type="InParanoid" id="P9WL53"/>
<dbReference type="Proteomes" id="UP000001584">
    <property type="component" value="Chromosome"/>
</dbReference>
<dbReference type="GO" id="GO:0005886">
    <property type="term" value="C:plasma membrane"/>
    <property type="evidence" value="ECO:0007005"/>
    <property type="project" value="MTBBASE"/>
</dbReference>
<accession>P9WL53</accession>
<accession>L0TD52</accession>
<accession>P65041</accession>
<accession>P71943</accession>
<proteinExistence type="predicted"/>
<organism>
    <name type="scientific">Mycobacterium tuberculosis (strain ATCC 25618 / H37Rv)</name>
    <dbReference type="NCBI Taxonomy" id="83332"/>
    <lineage>
        <taxon>Bacteria</taxon>
        <taxon>Bacillati</taxon>
        <taxon>Actinomycetota</taxon>
        <taxon>Actinomycetes</taxon>
        <taxon>Mycobacteriales</taxon>
        <taxon>Mycobacteriaceae</taxon>
        <taxon>Mycobacterium</taxon>
        <taxon>Mycobacterium tuberculosis complex</taxon>
    </lineage>
</organism>
<name>Y2644_MYCTU</name>
<reference key="1">
    <citation type="journal article" date="1998" name="Nature">
        <title>Deciphering the biology of Mycobacterium tuberculosis from the complete genome sequence.</title>
        <authorList>
            <person name="Cole S.T."/>
            <person name="Brosch R."/>
            <person name="Parkhill J."/>
            <person name="Garnier T."/>
            <person name="Churcher C.M."/>
            <person name="Harris D.E."/>
            <person name="Gordon S.V."/>
            <person name="Eiglmeier K."/>
            <person name="Gas S."/>
            <person name="Barry C.E. III"/>
            <person name="Tekaia F."/>
            <person name="Badcock K."/>
            <person name="Basham D."/>
            <person name="Brown D."/>
            <person name="Chillingworth T."/>
            <person name="Connor R."/>
            <person name="Davies R.M."/>
            <person name="Devlin K."/>
            <person name="Feltwell T."/>
            <person name="Gentles S."/>
            <person name="Hamlin N."/>
            <person name="Holroyd S."/>
            <person name="Hornsby T."/>
            <person name="Jagels K."/>
            <person name="Krogh A."/>
            <person name="McLean J."/>
            <person name="Moule S."/>
            <person name="Murphy L.D."/>
            <person name="Oliver S."/>
            <person name="Osborne J."/>
            <person name="Quail M.A."/>
            <person name="Rajandream M.A."/>
            <person name="Rogers J."/>
            <person name="Rutter S."/>
            <person name="Seeger K."/>
            <person name="Skelton S."/>
            <person name="Squares S."/>
            <person name="Squares R."/>
            <person name="Sulston J.E."/>
            <person name="Taylor K."/>
            <person name="Whitehead S."/>
            <person name="Barrell B.G."/>
        </authorList>
    </citation>
    <scope>NUCLEOTIDE SEQUENCE [LARGE SCALE GENOMIC DNA]</scope>
    <source>
        <strain>ATCC 25618 / H37Rv</strain>
    </source>
</reference>